<sequence length="82" mass="9280">MATSTNSREFLIFICVLTLLVVRSEARLVPMLFSTKEKVMNSKFGLREVINDVRNSEWLRKRALLGGKPERVSPGGPDAQHH</sequence>
<comment type="function">
    <molecule>CLE53p</molecule>
    <text evidence="3">Signaling peptide involved in the regulation of root colonization by arbuscular mycorrhizal (AM) fungi (PubMed:31477892). Moves from root to shoot to function with the receptor kinase SUNN, in a signaling pathway that repress strigolactone biosynthetic genes and strigolactone content in the roots, and consequently reduces the promotion of further colonization by AM fungi (PubMed:31477892).</text>
</comment>
<comment type="subcellular location">
    <molecule>CLE53p</molecule>
    <subcellularLocation>
        <location evidence="5">Secreted</location>
        <location evidence="5">Extracellular space</location>
    </subcellularLocation>
</comment>
<comment type="tissue specificity">
    <molecule>CLE53p</molecule>
    <text evidence="3">Expressed in root vasculature.</text>
</comment>
<comment type="induction">
    <molecule>CLE53p</molecule>
    <text evidence="3">Induced in vasculature of roots colonized with the arbuscular mycorrhizal (AM) fungi Rhizophagus irregularis and Glomus versiforme.</text>
</comment>
<comment type="PTM">
    <molecule>CLE53p</molecule>
    <text evidence="1">The O-glycosylation (arabinosylation) of the hydroxyproline Pro-77 enhances binding affinity of the CLE53p peptide for its receptor.</text>
</comment>
<comment type="miscellaneous">
    <text evidence="3">Roots of plants overexpressing CLE53 exhibit normal growth, but reduced levels of colonization by arbuscular mycorrhizal (AM) fungi (PubMed:31477892). Roots of plants silencing CLE53 exhibit normal growth, but reduced levels of colonization by arbuscular mycorrhizal (AM) fungi (PubMed:31477892).</text>
</comment>
<comment type="similarity">
    <text evidence="5">Belongs to the CLV3/ESR signal peptide family.</text>
</comment>
<reference key="1">
    <citation type="journal article" date="2011" name="Nature">
        <title>The Medicago genome provides insight into the evolution of rhizobial symbioses.</title>
        <authorList>
            <person name="Young N.D."/>
            <person name="Debelle F."/>
            <person name="Oldroyd G.E.D."/>
            <person name="Geurts R."/>
            <person name="Cannon S.B."/>
            <person name="Udvardi M.K."/>
            <person name="Benedito V.A."/>
            <person name="Mayer K.F.X."/>
            <person name="Gouzy J."/>
            <person name="Schoof H."/>
            <person name="Van de Peer Y."/>
            <person name="Proost S."/>
            <person name="Cook D.R."/>
            <person name="Meyers B.C."/>
            <person name="Spannagl M."/>
            <person name="Cheung F."/>
            <person name="De Mita S."/>
            <person name="Krishnakumar V."/>
            <person name="Gundlach H."/>
            <person name="Zhou S."/>
            <person name="Mudge J."/>
            <person name="Bharti A.K."/>
            <person name="Murray J.D."/>
            <person name="Naoumkina M.A."/>
            <person name="Rosen B."/>
            <person name="Silverstein K.A.T."/>
            <person name="Tang H."/>
            <person name="Rombauts S."/>
            <person name="Zhao P.X."/>
            <person name="Zhou P."/>
            <person name="Barbe V."/>
            <person name="Bardou P."/>
            <person name="Bechner M."/>
            <person name="Bellec A."/>
            <person name="Berger A."/>
            <person name="Berges H."/>
            <person name="Bidwell S."/>
            <person name="Bisseling T."/>
            <person name="Choisne N."/>
            <person name="Couloux A."/>
            <person name="Denny R."/>
            <person name="Deshpande S."/>
            <person name="Dai X."/>
            <person name="Doyle J.J."/>
            <person name="Dudez A.-M."/>
            <person name="Farmer A.D."/>
            <person name="Fouteau S."/>
            <person name="Franken C."/>
            <person name="Gibelin C."/>
            <person name="Gish J."/>
            <person name="Goldstein S."/>
            <person name="Gonzalez A.J."/>
            <person name="Green P.J."/>
            <person name="Hallab A."/>
            <person name="Hartog M."/>
            <person name="Hua A."/>
            <person name="Humphray S.J."/>
            <person name="Jeong D.-H."/>
            <person name="Jing Y."/>
            <person name="Jocker A."/>
            <person name="Kenton S.M."/>
            <person name="Kim D.-J."/>
            <person name="Klee K."/>
            <person name="Lai H."/>
            <person name="Lang C."/>
            <person name="Lin S."/>
            <person name="Macmil S.L."/>
            <person name="Magdelenat G."/>
            <person name="Matthews L."/>
            <person name="McCorrison J."/>
            <person name="Monaghan E.L."/>
            <person name="Mun J.-H."/>
            <person name="Najar F.Z."/>
            <person name="Nicholson C."/>
            <person name="Noirot C."/>
            <person name="O'Bleness M."/>
            <person name="Paule C.R."/>
            <person name="Poulain J."/>
            <person name="Prion F."/>
            <person name="Qin B."/>
            <person name="Qu C."/>
            <person name="Retzel E.F."/>
            <person name="Riddle C."/>
            <person name="Sallet E."/>
            <person name="Samain S."/>
            <person name="Samson N."/>
            <person name="Sanders I."/>
            <person name="Saurat O."/>
            <person name="Scarpelli C."/>
            <person name="Schiex T."/>
            <person name="Segurens B."/>
            <person name="Severin A.J."/>
            <person name="Sherrier D.J."/>
            <person name="Shi R."/>
            <person name="Sims S."/>
            <person name="Singer S.R."/>
            <person name="Sinharoy S."/>
            <person name="Sterck L."/>
            <person name="Viollet A."/>
            <person name="Wang B.-B."/>
            <person name="Wang K."/>
            <person name="Wang M."/>
            <person name="Wang X."/>
            <person name="Warfsmann J."/>
            <person name="Weissenbach J."/>
            <person name="White D.D."/>
            <person name="White J.D."/>
            <person name="Wiley G.B."/>
            <person name="Wincker P."/>
            <person name="Xing Y."/>
            <person name="Yang L."/>
            <person name="Yao Z."/>
            <person name="Ying F."/>
            <person name="Zhai J."/>
            <person name="Zhou L."/>
            <person name="Zuber A."/>
            <person name="Denarie J."/>
            <person name="Dixon R.A."/>
            <person name="May G.D."/>
            <person name="Schwartz D.C."/>
            <person name="Rogers J."/>
            <person name="Quetier F."/>
            <person name="Town C.D."/>
            <person name="Roe B.A."/>
        </authorList>
    </citation>
    <scope>NUCLEOTIDE SEQUENCE [LARGE SCALE GENOMIC DNA]</scope>
    <source>
        <strain>cv. Jemalong A17</strain>
    </source>
</reference>
<reference key="2">
    <citation type="journal article" date="2014" name="BMC Genomics">
        <title>An improved genome release (version Mt4.0) for the model legume Medicago truncatula.</title>
        <authorList>
            <person name="Tang H."/>
            <person name="Krishnakumar V."/>
            <person name="Bidwell S."/>
            <person name="Rosen B."/>
            <person name="Chan A."/>
            <person name="Zhou S."/>
            <person name="Gentzbittel L."/>
            <person name="Childs K.L."/>
            <person name="Yandell M."/>
            <person name="Gundlach H."/>
            <person name="Mayer K.F."/>
            <person name="Schwartz D.C."/>
            <person name="Town C.D."/>
        </authorList>
    </citation>
    <scope>GENOME REANNOTATION</scope>
    <source>
        <strain>cv. Jemalong A17</strain>
    </source>
</reference>
<reference key="3">
    <citation type="journal article" date="2018" name="Nat. Plants">
        <title>Whole-genome landscape of Medicago truncatula symbiotic genes.</title>
        <authorList>
            <person name="Pecrix Y."/>
            <person name="Staton S.E."/>
            <person name="Sallet E."/>
            <person name="Lelandais-Briere C."/>
            <person name="Moreau S."/>
            <person name="Carrere S."/>
            <person name="Blein T."/>
            <person name="Jardinaud M.F."/>
            <person name="Latrasse D."/>
            <person name="Zouine M."/>
            <person name="Zahm M."/>
            <person name="Kreplak J."/>
            <person name="Mayjonade B."/>
            <person name="Satge C."/>
            <person name="Perez M."/>
            <person name="Cauet S."/>
            <person name="Marande W."/>
            <person name="Chantry-Darmon C."/>
            <person name="Lopez-Roques C."/>
            <person name="Bouchez O."/>
            <person name="Berard A."/>
            <person name="Debelle F."/>
            <person name="Munos S."/>
            <person name="Bendahmane A."/>
            <person name="Berges H."/>
            <person name="Niebel A."/>
            <person name="Buitink J."/>
            <person name="Frugier F."/>
            <person name="Benhamed M."/>
            <person name="Crespi M."/>
            <person name="Gouzy J."/>
            <person name="Gamas P."/>
        </authorList>
    </citation>
    <scope>NUCLEOTIDE SEQUENCE [LARGE SCALE GENOMIC DNA]</scope>
    <source>
        <strain>cv. Jemalong A17</strain>
    </source>
</reference>
<reference key="4">
    <citation type="journal article" date="2019" name="Nat. Plants">
        <title>A CLE-SUNN module regulates strigolactone content and fungal colonization in arbuscular mycorrhiza.</title>
        <authorList>
            <person name="Mueller L.M."/>
            <person name="Flokova K."/>
            <person name="Schnabel E."/>
            <person name="Sun X."/>
            <person name="Fei Z."/>
            <person name="Frugoli J."/>
            <person name="Bouwmeester H.J."/>
            <person name="Harrison M.J."/>
        </authorList>
    </citation>
    <scope>FUNCTION</scope>
    <scope>TISSUE SPECIFICITY</scope>
    <scope>INDUCTION</scope>
</reference>
<feature type="signal peptide" evidence="2">
    <location>
        <begin position="1"/>
        <end position="26"/>
    </location>
</feature>
<feature type="chain" id="PRO_5014498923" description="CLAVATA3/ESR (CLE)-related protein 53">
    <location>
        <begin position="27"/>
        <end position="82"/>
    </location>
</feature>
<feature type="peptide" id="PRO_0000448637" description="CLE53p">
    <location>
        <begin position="71"/>
        <end position="82"/>
    </location>
</feature>
<feature type="modified residue" description="Hydroxyproline" evidence="1">
    <location>
        <position position="74"/>
    </location>
</feature>
<feature type="modified residue" description="Hydroxyproline" evidence="1">
    <location>
        <position position="77"/>
    </location>
</feature>
<feature type="glycosylation site" description="O-linked (Ara...) hydroxyproline" evidence="1">
    <location>
        <position position="77"/>
    </location>
</feature>
<gene>
    <name evidence="4" type="primary">CLE53</name>
    <name evidence="6" type="ordered locus">MTR_8g463700</name>
    <name evidence="7" type="ORF">MtrunA17_Chr8g0360491</name>
</gene>
<protein>
    <recommendedName>
        <fullName evidence="4">CLAVATA3/ESR (CLE)-related protein 53</fullName>
        <shortName evidence="4">MtCLE53</shortName>
    </recommendedName>
    <component>
        <recommendedName>
            <fullName evidence="5">CLE53p</fullName>
        </recommendedName>
    </component>
</protein>
<dbReference type="EMBL" id="CM001224">
    <property type="protein sequence ID" value="KEH19543.1"/>
    <property type="molecule type" value="Genomic_DNA"/>
</dbReference>
<dbReference type="EMBL" id="PSQE01000008">
    <property type="protein sequence ID" value="RHN40937.1"/>
    <property type="molecule type" value="Genomic_DNA"/>
</dbReference>
<dbReference type="RefSeq" id="XP_013445517.1">
    <property type="nucleotide sequence ID" value="XM_013590063.1"/>
</dbReference>
<dbReference type="STRING" id="3880.A0A072TRR8"/>
<dbReference type="GlyCosmos" id="A0A072TRR8">
    <property type="glycosylation" value="1 site, No reported glycans"/>
</dbReference>
<dbReference type="EnsemblPlants" id="rna47185">
    <property type="protein sequence ID" value="RHN40937.1"/>
    <property type="gene ID" value="gene47185"/>
</dbReference>
<dbReference type="Gramene" id="rna47185">
    <property type="protein sequence ID" value="RHN40937.1"/>
    <property type="gene ID" value="gene47185"/>
</dbReference>
<dbReference type="HOGENOM" id="CLU_154904_2_0_1"/>
<dbReference type="Proteomes" id="UP000002051">
    <property type="component" value="Chromosome 8"/>
</dbReference>
<dbReference type="Proteomes" id="UP000265566">
    <property type="component" value="Chromosome 8"/>
</dbReference>
<dbReference type="GO" id="GO:0005576">
    <property type="term" value="C:extracellular region"/>
    <property type="evidence" value="ECO:0007669"/>
    <property type="project" value="UniProtKB-SubCell"/>
</dbReference>
<dbReference type="GO" id="GO:0030154">
    <property type="term" value="P:cell differentiation"/>
    <property type="evidence" value="ECO:0007669"/>
    <property type="project" value="UniProtKB-KW"/>
</dbReference>
<dbReference type="InterPro" id="IPR039617">
    <property type="entry name" value="CLAVATA3-CLE"/>
</dbReference>
<dbReference type="PANTHER" id="PTHR36016">
    <property type="entry name" value="CLAVATA3/ESR (CLE)-RELATED PROTEIN 7"/>
    <property type="match status" value="1"/>
</dbReference>
<dbReference type="PANTHER" id="PTHR36016:SF14">
    <property type="entry name" value="CLAVATA3_ESR (CLE)-RELATED PROTEIN 53"/>
    <property type="match status" value="1"/>
</dbReference>
<name>CLE53_MEDTR</name>
<keyword id="KW-0217">Developmental protein</keyword>
<keyword id="KW-0221">Differentiation</keyword>
<keyword id="KW-0325">Glycoprotein</keyword>
<keyword id="KW-0379">Hydroxylation</keyword>
<keyword id="KW-1185">Reference proteome</keyword>
<keyword id="KW-0964">Secreted</keyword>
<keyword id="KW-0732">Signal</keyword>
<accession>A0A072TRR8</accession>
<evidence type="ECO:0000250" key="1">
    <source>
        <dbReference type="UniProtKB" id="O49519"/>
    </source>
</evidence>
<evidence type="ECO:0000255" key="2"/>
<evidence type="ECO:0000269" key="3">
    <source>
    </source>
</evidence>
<evidence type="ECO:0000303" key="4">
    <source>
    </source>
</evidence>
<evidence type="ECO:0000305" key="5"/>
<evidence type="ECO:0000312" key="6">
    <source>
        <dbReference type="EMBL" id="KEH19543.1"/>
    </source>
</evidence>
<evidence type="ECO:0000312" key="7">
    <source>
        <dbReference type="EMBL" id="RHN40937.1"/>
    </source>
</evidence>
<proteinExistence type="evidence at transcript level"/>
<organism>
    <name type="scientific">Medicago truncatula</name>
    <name type="common">Barrel medic</name>
    <name type="synonym">Medicago tribuloides</name>
    <dbReference type="NCBI Taxonomy" id="3880"/>
    <lineage>
        <taxon>Eukaryota</taxon>
        <taxon>Viridiplantae</taxon>
        <taxon>Streptophyta</taxon>
        <taxon>Embryophyta</taxon>
        <taxon>Tracheophyta</taxon>
        <taxon>Spermatophyta</taxon>
        <taxon>Magnoliopsida</taxon>
        <taxon>eudicotyledons</taxon>
        <taxon>Gunneridae</taxon>
        <taxon>Pentapetalae</taxon>
        <taxon>rosids</taxon>
        <taxon>fabids</taxon>
        <taxon>Fabales</taxon>
        <taxon>Fabaceae</taxon>
        <taxon>Papilionoideae</taxon>
        <taxon>50 kb inversion clade</taxon>
        <taxon>NPAAA clade</taxon>
        <taxon>Hologalegina</taxon>
        <taxon>IRL clade</taxon>
        <taxon>Trifolieae</taxon>
        <taxon>Medicago</taxon>
    </lineage>
</organism>